<sequence length="321" mass="36083">MIKLLYPEFWQKRNIIAYLLLPISLIYQFLGYLRASLARPIMLPAKVICVGNCSVGGTGKTQIVMYLAKLLKARNVSFVIVTKAYGSNLKSATTIHQGHTALEVGDEGVILAKYGAVIATKNIKEIVPLINELKPDIIIVDDFLQNPYFHKDFTIVSVDSQRLFGNGFLIPAGPLRQYPNKALDAADLIFLVSSHQDKIPQILTPYVNKLINAQIVPSNNIDKTKNYFAFSGIGNPERFFATLKNYGLNITGYKIFPDHYNYLQADLENLYSLAKEHNAILVTTRKDHVKFNDLNNNIVCLDVELSINHPDLLNEKIFKKA</sequence>
<gene>
    <name evidence="1" type="primary">lpxK</name>
    <name type="ordered locus">RrIowa_1303</name>
</gene>
<dbReference type="EC" id="2.7.1.130" evidence="1"/>
<dbReference type="EMBL" id="CP000766">
    <property type="protein sequence ID" value="ABY73047.1"/>
    <property type="molecule type" value="Genomic_DNA"/>
</dbReference>
<dbReference type="RefSeq" id="WP_012151226.1">
    <property type="nucleotide sequence ID" value="NC_010263.3"/>
</dbReference>
<dbReference type="SMR" id="B0BUY7"/>
<dbReference type="GeneID" id="79937740"/>
<dbReference type="KEGG" id="rrj:RrIowa_1303"/>
<dbReference type="eggNOG" id="COG1663">
    <property type="taxonomic scope" value="Bacteria"/>
</dbReference>
<dbReference type="HOGENOM" id="CLU_038816_0_0_5"/>
<dbReference type="UniPathway" id="UPA00359">
    <property type="reaction ID" value="UER00482"/>
</dbReference>
<dbReference type="Proteomes" id="UP000000796">
    <property type="component" value="Chromosome"/>
</dbReference>
<dbReference type="GO" id="GO:0005886">
    <property type="term" value="C:plasma membrane"/>
    <property type="evidence" value="ECO:0007669"/>
    <property type="project" value="TreeGrafter"/>
</dbReference>
<dbReference type="GO" id="GO:0005524">
    <property type="term" value="F:ATP binding"/>
    <property type="evidence" value="ECO:0007669"/>
    <property type="project" value="UniProtKB-UniRule"/>
</dbReference>
<dbReference type="GO" id="GO:0009029">
    <property type="term" value="F:tetraacyldisaccharide 4'-kinase activity"/>
    <property type="evidence" value="ECO:0007669"/>
    <property type="project" value="UniProtKB-UniRule"/>
</dbReference>
<dbReference type="GO" id="GO:0009245">
    <property type="term" value="P:lipid A biosynthetic process"/>
    <property type="evidence" value="ECO:0007669"/>
    <property type="project" value="UniProtKB-UniRule"/>
</dbReference>
<dbReference type="GO" id="GO:0009244">
    <property type="term" value="P:lipopolysaccharide core region biosynthetic process"/>
    <property type="evidence" value="ECO:0007669"/>
    <property type="project" value="TreeGrafter"/>
</dbReference>
<dbReference type="HAMAP" id="MF_00409">
    <property type="entry name" value="LpxK"/>
    <property type="match status" value="1"/>
</dbReference>
<dbReference type="InterPro" id="IPR003758">
    <property type="entry name" value="LpxK"/>
</dbReference>
<dbReference type="InterPro" id="IPR027417">
    <property type="entry name" value="P-loop_NTPase"/>
</dbReference>
<dbReference type="NCBIfam" id="TIGR00682">
    <property type="entry name" value="lpxK"/>
    <property type="match status" value="1"/>
</dbReference>
<dbReference type="PANTHER" id="PTHR42724">
    <property type="entry name" value="TETRAACYLDISACCHARIDE 4'-KINASE"/>
    <property type="match status" value="1"/>
</dbReference>
<dbReference type="PANTHER" id="PTHR42724:SF1">
    <property type="entry name" value="TETRAACYLDISACCHARIDE 4'-KINASE, MITOCHONDRIAL-RELATED"/>
    <property type="match status" value="1"/>
</dbReference>
<dbReference type="Pfam" id="PF02606">
    <property type="entry name" value="LpxK"/>
    <property type="match status" value="1"/>
</dbReference>
<dbReference type="SUPFAM" id="SSF52540">
    <property type="entry name" value="P-loop containing nucleoside triphosphate hydrolases"/>
    <property type="match status" value="1"/>
</dbReference>
<evidence type="ECO:0000255" key="1">
    <source>
        <dbReference type="HAMAP-Rule" id="MF_00409"/>
    </source>
</evidence>
<name>LPXK_RICRO</name>
<proteinExistence type="inferred from homology"/>
<protein>
    <recommendedName>
        <fullName evidence="1">Tetraacyldisaccharide 4'-kinase</fullName>
        <ecNumber evidence="1">2.7.1.130</ecNumber>
    </recommendedName>
    <alternativeName>
        <fullName evidence="1">Lipid A 4'-kinase</fullName>
    </alternativeName>
</protein>
<organism>
    <name type="scientific">Rickettsia rickettsii (strain Iowa)</name>
    <dbReference type="NCBI Taxonomy" id="452659"/>
    <lineage>
        <taxon>Bacteria</taxon>
        <taxon>Pseudomonadati</taxon>
        <taxon>Pseudomonadota</taxon>
        <taxon>Alphaproteobacteria</taxon>
        <taxon>Rickettsiales</taxon>
        <taxon>Rickettsiaceae</taxon>
        <taxon>Rickettsieae</taxon>
        <taxon>Rickettsia</taxon>
        <taxon>spotted fever group</taxon>
    </lineage>
</organism>
<reference key="1">
    <citation type="journal article" date="2008" name="Infect. Immun.">
        <title>Genomic comparison of virulent Rickettsia rickettsii Sheila Smith and avirulent Rickettsia rickettsii Iowa.</title>
        <authorList>
            <person name="Ellison D.W."/>
            <person name="Clark T.R."/>
            <person name="Sturdevant D.E."/>
            <person name="Virtaneva K."/>
            <person name="Porcella S.F."/>
            <person name="Hackstadt T."/>
        </authorList>
    </citation>
    <scope>NUCLEOTIDE SEQUENCE [LARGE SCALE GENOMIC DNA]</scope>
    <source>
        <strain>Iowa</strain>
    </source>
</reference>
<comment type="function">
    <text evidence="1">Transfers the gamma-phosphate of ATP to the 4'-position of a tetraacyldisaccharide 1-phosphate intermediate (termed DS-1-P) to form tetraacyldisaccharide 1,4'-bis-phosphate (lipid IVA).</text>
</comment>
<comment type="catalytic activity">
    <reaction evidence="1">
        <text>a lipid A disaccharide + ATP = a lipid IVA + ADP + H(+)</text>
        <dbReference type="Rhea" id="RHEA:67840"/>
        <dbReference type="ChEBI" id="CHEBI:15378"/>
        <dbReference type="ChEBI" id="CHEBI:30616"/>
        <dbReference type="ChEBI" id="CHEBI:176343"/>
        <dbReference type="ChEBI" id="CHEBI:176425"/>
        <dbReference type="ChEBI" id="CHEBI:456216"/>
        <dbReference type="EC" id="2.7.1.130"/>
    </reaction>
</comment>
<comment type="pathway">
    <text evidence="1">Glycolipid biosynthesis; lipid IV(A) biosynthesis; lipid IV(A) from (3R)-3-hydroxytetradecanoyl-[acyl-carrier-protein] and UDP-N-acetyl-alpha-D-glucosamine: step 6/6.</text>
</comment>
<comment type="similarity">
    <text evidence="1">Belongs to the LpxK family.</text>
</comment>
<keyword id="KW-0067">ATP-binding</keyword>
<keyword id="KW-0418">Kinase</keyword>
<keyword id="KW-0441">Lipid A biosynthesis</keyword>
<keyword id="KW-0444">Lipid biosynthesis</keyword>
<keyword id="KW-0443">Lipid metabolism</keyword>
<keyword id="KW-0547">Nucleotide-binding</keyword>
<keyword id="KW-0808">Transferase</keyword>
<accession>B0BUY7</accession>
<feature type="chain" id="PRO_1000080472" description="Tetraacyldisaccharide 4'-kinase">
    <location>
        <begin position="1"/>
        <end position="321"/>
    </location>
</feature>
<feature type="binding site" evidence="1">
    <location>
        <begin position="54"/>
        <end position="61"/>
    </location>
    <ligand>
        <name>ATP</name>
        <dbReference type="ChEBI" id="CHEBI:30616"/>
    </ligand>
</feature>